<accession>Q1J7G1</accession>
<keyword id="KW-0066">ATP synthesis</keyword>
<keyword id="KW-0067">ATP-binding</keyword>
<keyword id="KW-1003">Cell membrane</keyword>
<keyword id="KW-0139">CF(1)</keyword>
<keyword id="KW-0375">Hydrogen ion transport</keyword>
<keyword id="KW-0406">Ion transport</keyword>
<keyword id="KW-0472">Membrane</keyword>
<keyword id="KW-0547">Nucleotide-binding</keyword>
<keyword id="KW-1278">Translocase</keyword>
<keyword id="KW-0813">Transport</keyword>
<comment type="function">
    <text evidence="1">Produces ATP from ADP in the presence of a proton gradient across the membrane. The alpha chain is a regulatory subunit.</text>
</comment>
<comment type="catalytic activity">
    <reaction evidence="1">
        <text>ATP + H2O + 4 H(+)(in) = ADP + phosphate + 5 H(+)(out)</text>
        <dbReference type="Rhea" id="RHEA:57720"/>
        <dbReference type="ChEBI" id="CHEBI:15377"/>
        <dbReference type="ChEBI" id="CHEBI:15378"/>
        <dbReference type="ChEBI" id="CHEBI:30616"/>
        <dbReference type="ChEBI" id="CHEBI:43474"/>
        <dbReference type="ChEBI" id="CHEBI:456216"/>
        <dbReference type="EC" id="7.1.2.2"/>
    </reaction>
</comment>
<comment type="subunit">
    <text evidence="1">F-type ATPases have 2 components, CF(1) - the catalytic core - and CF(0) - the membrane proton channel. CF(1) has five subunits: alpha(3), beta(3), gamma(1), delta(1), epsilon(1). CF(0) has three main subunits: a(1), b(2) and c(9-12). The alpha and beta chains form an alternating ring which encloses part of the gamma chain. CF(1) is attached to CF(0) by a central stalk formed by the gamma and epsilon chains, while a peripheral stalk is formed by the delta and b chains.</text>
</comment>
<comment type="subcellular location">
    <subcellularLocation>
        <location evidence="1">Cell membrane</location>
        <topology evidence="1">Peripheral membrane protein</topology>
    </subcellularLocation>
</comment>
<comment type="similarity">
    <text evidence="1">Belongs to the ATPase alpha/beta chains family.</text>
</comment>
<name>ATPA_STRPF</name>
<reference key="1">
    <citation type="journal article" date="2006" name="Proc. Natl. Acad. Sci. U.S.A.">
        <title>Molecular genetic anatomy of inter- and intraserotype variation in the human bacterial pathogen group A Streptococcus.</title>
        <authorList>
            <person name="Beres S.B."/>
            <person name="Richter E.W."/>
            <person name="Nagiec M.J."/>
            <person name="Sumby P."/>
            <person name="Porcella S.F."/>
            <person name="DeLeo F.R."/>
            <person name="Musser J.M."/>
        </authorList>
    </citation>
    <scope>NUCLEOTIDE SEQUENCE [LARGE SCALE GENOMIC DNA]</scope>
    <source>
        <strain>MGAS10750</strain>
    </source>
</reference>
<dbReference type="EC" id="7.1.2.2" evidence="1"/>
<dbReference type="EMBL" id="CP000262">
    <property type="protein sequence ID" value="ABF37613.1"/>
    <property type="molecule type" value="Genomic_DNA"/>
</dbReference>
<dbReference type="SMR" id="Q1J7G1"/>
<dbReference type="KEGG" id="spi:MGAS10750_Spy0663"/>
<dbReference type="HOGENOM" id="CLU_010091_2_1_9"/>
<dbReference type="Proteomes" id="UP000002434">
    <property type="component" value="Chromosome"/>
</dbReference>
<dbReference type="GO" id="GO:0005886">
    <property type="term" value="C:plasma membrane"/>
    <property type="evidence" value="ECO:0007669"/>
    <property type="project" value="UniProtKB-SubCell"/>
</dbReference>
<dbReference type="GO" id="GO:0045259">
    <property type="term" value="C:proton-transporting ATP synthase complex"/>
    <property type="evidence" value="ECO:0007669"/>
    <property type="project" value="UniProtKB-KW"/>
</dbReference>
<dbReference type="GO" id="GO:0043531">
    <property type="term" value="F:ADP binding"/>
    <property type="evidence" value="ECO:0007669"/>
    <property type="project" value="TreeGrafter"/>
</dbReference>
<dbReference type="GO" id="GO:0005524">
    <property type="term" value="F:ATP binding"/>
    <property type="evidence" value="ECO:0007669"/>
    <property type="project" value="UniProtKB-UniRule"/>
</dbReference>
<dbReference type="GO" id="GO:0046933">
    <property type="term" value="F:proton-transporting ATP synthase activity, rotational mechanism"/>
    <property type="evidence" value="ECO:0007669"/>
    <property type="project" value="UniProtKB-UniRule"/>
</dbReference>
<dbReference type="CDD" id="cd18113">
    <property type="entry name" value="ATP-synt_F1_alpha_C"/>
    <property type="match status" value="1"/>
</dbReference>
<dbReference type="CDD" id="cd18116">
    <property type="entry name" value="ATP-synt_F1_alpha_N"/>
    <property type="match status" value="1"/>
</dbReference>
<dbReference type="CDD" id="cd01132">
    <property type="entry name" value="F1-ATPase_alpha_CD"/>
    <property type="match status" value="1"/>
</dbReference>
<dbReference type="FunFam" id="1.20.150.20:FF:000001">
    <property type="entry name" value="ATP synthase subunit alpha"/>
    <property type="match status" value="1"/>
</dbReference>
<dbReference type="FunFam" id="2.40.30.20:FF:000001">
    <property type="entry name" value="ATP synthase subunit alpha"/>
    <property type="match status" value="1"/>
</dbReference>
<dbReference type="FunFam" id="3.40.50.300:FF:000002">
    <property type="entry name" value="ATP synthase subunit alpha"/>
    <property type="match status" value="1"/>
</dbReference>
<dbReference type="Gene3D" id="2.40.30.20">
    <property type="match status" value="1"/>
</dbReference>
<dbReference type="Gene3D" id="1.20.150.20">
    <property type="entry name" value="ATP synthase alpha/beta chain, C-terminal domain"/>
    <property type="match status" value="1"/>
</dbReference>
<dbReference type="Gene3D" id="3.40.50.300">
    <property type="entry name" value="P-loop containing nucleotide triphosphate hydrolases"/>
    <property type="match status" value="1"/>
</dbReference>
<dbReference type="HAMAP" id="MF_01346">
    <property type="entry name" value="ATP_synth_alpha_bact"/>
    <property type="match status" value="1"/>
</dbReference>
<dbReference type="InterPro" id="IPR023366">
    <property type="entry name" value="ATP_synth_asu-like_sf"/>
</dbReference>
<dbReference type="InterPro" id="IPR000793">
    <property type="entry name" value="ATP_synth_asu_C"/>
</dbReference>
<dbReference type="InterPro" id="IPR038376">
    <property type="entry name" value="ATP_synth_asu_C_sf"/>
</dbReference>
<dbReference type="InterPro" id="IPR033732">
    <property type="entry name" value="ATP_synth_F1_a_nt-bd_dom"/>
</dbReference>
<dbReference type="InterPro" id="IPR005294">
    <property type="entry name" value="ATP_synth_F1_asu"/>
</dbReference>
<dbReference type="InterPro" id="IPR004100">
    <property type="entry name" value="ATPase_F1/V1/A1_a/bsu_N"/>
</dbReference>
<dbReference type="InterPro" id="IPR036121">
    <property type="entry name" value="ATPase_F1/V1/A1_a/bsu_N_sf"/>
</dbReference>
<dbReference type="InterPro" id="IPR000194">
    <property type="entry name" value="ATPase_F1/V1/A1_a/bsu_nucl-bd"/>
</dbReference>
<dbReference type="InterPro" id="IPR027417">
    <property type="entry name" value="P-loop_NTPase"/>
</dbReference>
<dbReference type="NCBIfam" id="TIGR00962">
    <property type="entry name" value="atpA"/>
    <property type="match status" value="1"/>
</dbReference>
<dbReference type="NCBIfam" id="NF009884">
    <property type="entry name" value="PRK13343.1"/>
    <property type="match status" value="1"/>
</dbReference>
<dbReference type="PANTHER" id="PTHR48082">
    <property type="entry name" value="ATP SYNTHASE SUBUNIT ALPHA, MITOCHONDRIAL"/>
    <property type="match status" value="1"/>
</dbReference>
<dbReference type="PANTHER" id="PTHR48082:SF2">
    <property type="entry name" value="ATP SYNTHASE SUBUNIT ALPHA, MITOCHONDRIAL"/>
    <property type="match status" value="1"/>
</dbReference>
<dbReference type="Pfam" id="PF00006">
    <property type="entry name" value="ATP-synt_ab"/>
    <property type="match status" value="1"/>
</dbReference>
<dbReference type="Pfam" id="PF00306">
    <property type="entry name" value="ATP-synt_ab_C"/>
    <property type="match status" value="1"/>
</dbReference>
<dbReference type="Pfam" id="PF02874">
    <property type="entry name" value="ATP-synt_ab_N"/>
    <property type="match status" value="1"/>
</dbReference>
<dbReference type="PIRSF" id="PIRSF039088">
    <property type="entry name" value="F_ATPase_subunit_alpha"/>
    <property type="match status" value="1"/>
</dbReference>
<dbReference type="SUPFAM" id="SSF47917">
    <property type="entry name" value="C-terminal domain of alpha and beta subunits of F1 ATP synthase"/>
    <property type="match status" value="1"/>
</dbReference>
<dbReference type="SUPFAM" id="SSF50615">
    <property type="entry name" value="N-terminal domain of alpha and beta subunits of F1 ATP synthase"/>
    <property type="match status" value="1"/>
</dbReference>
<dbReference type="SUPFAM" id="SSF52540">
    <property type="entry name" value="P-loop containing nucleoside triphosphate hydrolases"/>
    <property type="match status" value="1"/>
</dbReference>
<protein>
    <recommendedName>
        <fullName evidence="1">ATP synthase subunit alpha</fullName>
        <ecNumber evidence="1">7.1.2.2</ecNumber>
    </recommendedName>
    <alternativeName>
        <fullName evidence="1">ATP synthase F1 sector subunit alpha</fullName>
    </alternativeName>
    <alternativeName>
        <fullName evidence="1">F-ATPase subunit alpha</fullName>
    </alternativeName>
</protein>
<gene>
    <name evidence="1" type="primary">atpA</name>
    <name type="ordered locus">MGAS10750_Spy0663</name>
</gene>
<evidence type="ECO:0000255" key="1">
    <source>
        <dbReference type="HAMAP-Rule" id="MF_01346"/>
    </source>
</evidence>
<feature type="chain" id="PRO_0000256118" description="ATP synthase subunit alpha">
    <location>
        <begin position="1"/>
        <end position="502"/>
    </location>
</feature>
<feature type="binding site" evidence="1">
    <location>
        <begin position="169"/>
        <end position="176"/>
    </location>
    <ligand>
        <name>ATP</name>
        <dbReference type="ChEBI" id="CHEBI:30616"/>
    </ligand>
</feature>
<feature type="site" description="Required for activity" evidence="1">
    <location>
        <position position="362"/>
    </location>
</feature>
<organism>
    <name type="scientific">Streptococcus pyogenes serotype M4 (strain MGAS10750)</name>
    <dbReference type="NCBI Taxonomy" id="370554"/>
    <lineage>
        <taxon>Bacteria</taxon>
        <taxon>Bacillati</taxon>
        <taxon>Bacillota</taxon>
        <taxon>Bacilli</taxon>
        <taxon>Lactobacillales</taxon>
        <taxon>Streptococcaceae</taxon>
        <taxon>Streptococcus</taxon>
    </lineage>
</organism>
<sequence length="502" mass="54685">MAINAQEISALIKKQIENFQPNFDVTETGIVTYIGDGIARARGLDNAMSGELLEFENGAYGMAQNLESNDVGIIILGDFSAIREGDVVKRTGKIMEVPVGEALIGRVVNPLGQPVDGLGDIETTGFRPVETPAPGVMQRKSVSEPLQTGLKAIDALVPIGRGQRELIIGDRQTGKTSVAIDAILNQKGQDMICIYVAIGQKESTVRTQVETLRRYGALDYTIVVTASASQPSPLLFIAPYAGVAMAEEFMYQGKHVLIVYDDLSKQAVAYRELSLLLRRPPGREAYPGDVFYLHSRLLERSAKVSDDLGGGSITALPFIETQAGDISAYIATNVISITDGQIFLQENLFNSGIRPAIDAGSSVSRVGGSAQIKAMKKVAGTLRLDLASYRELEAFTQFGSDLDAATQAKLNRGRRTVEILKQPLHKPLPVEKQVVILYALTHGFLDDVPVDDILAFEEALYDYFDVHYNDLFETIRTTKDLPEEAALDAAIKAFKEHSNFKS</sequence>
<proteinExistence type="inferred from homology"/>